<name>PHOP2_BOVIN</name>
<keyword id="KW-0378">Hydrolase</keyword>
<keyword id="KW-0460">Magnesium</keyword>
<keyword id="KW-0479">Metal-binding</keyword>
<keyword id="KW-0663">Pyridoxal phosphate</keyword>
<keyword id="KW-1185">Reference proteome</keyword>
<dbReference type="EC" id="3.1.3.74" evidence="1"/>
<dbReference type="EMBL" id="BC112815">
    <property type="protein sequence ID" value="AAI12816.1"/>
    <property type="molecule type" value="mRNA"/>
</dbReference>
<dbReference type="RefSeq" id="NP_001039430.1">
    <property type="nucleotide sequence ID" value="NM_001045965.2"/>
</dbReference>
<dbReference type="RefSeq" id="XP_010800188.1">
    <property type="nucleotide sequence ID" value="XM_010801886.2"/>
</dbReference>
<dbReference type="RefSeq" id="XP_024855707.1">
    <property type="nucleotide sequence ID" value="XM_024999939.2"/>
</dbReference>
<dbReference type="FunCoup" id="Q2KI06">
    <property type="interactions" value="2116"/>
</dbReference>
<dbReference type="STRING" id="9913.ENSBTAP00000001446"/>
<dbReference type="PaxDb" id="9913-ENSBTAP00000001446"/>
<dbReference type="Ensembl" id="ENSBTAT00000111040.1">
    <property type="protein sequence ID" value="ENSBTAP00000089475.1"/>
    <property type="gene ID" value="ENSBTAG00000001092.5"/>
</dbReference>
<dbReference type="Ensembl" id="ENSBTAT00000128996.1">
    <property type="protein sequence ID" value="ENSBTAP00000088725.1"/>
    <property type="gene ID" value="ENSBTAG00000001092.5"/>
</dbReference>
<dbReference type="GeneID" id="507308"/>
<dbReference type="KEGG" id="bta:507308"/>
<dbReference type="CTD" id="493911"/>
<dbReference type="VEuPathDB" id="HostDB:ENSBTAG00000001092"/>
<dbReference type="VGNC" id="VGNC:32843">
    <property type="gene designation" value="PHOSPHO2"/>
</dbReference>
<dbReference type="eggNOG" id="KOG3120">
    <property type="taxonomic scope" value="Eukaryota"/>
</dbReference>
<dbReference type="GeneTree" id="ENSGT00390000007741"/>
<dbReference type="HOGENOM" id="CLU_068983_0_1_1"/>
<dbReference type="InParanoid" id="Q2KI06"/>
<dbReference type="OMA" id="HNLADCF"/>
<dbReference type="OrthoDB" id="10267182at2759"/>
<dbReference type="TreeFam" id="TF300112"/>
<dbReference type="Proteomes" id="UP000009136">
    <property type="component" value="Chromosome 2"/>
</dbReference>
<dbReference type="Bgee" id="ENSBTAG00000001092">
    <property type="expression patterns" value="Expressed in oocyte and 108 other cell types or tissues"/>
</dbReference>
<dbReference type="GO" id="GO:0046872">
    <property type="term" value="F:metal ion binding"/>
    <property type="evidence" value="ECO:0007669"/>
    <property type="project" value="UniProtKB-KW"/>
</dbReference>
<dbReference type="GO" id="GO:0016791">
    <property type="term" value="F:phosphatase activity"/>
    <property type="evidence" value="ECO:0000318"/>
    <property type="project" value="GO_Central"/>
</dbReference>
<dbReference type="GO" id="GO:0033883">
    <property type="term" value="F:pyridoxal phosphatase activity"/>
    <property type="evidence" value="ECO:0007669"/>
    <property type="project" value="UniProtKB-EC"/>
</dbReference>
<dbReference type="CDD" id="cd16418">
    <property type="entry name" value="HAD_Pase"/>
    <property type="match status" value="1"/>
</dbReference>
<dbReference type="Gene3D" id="3.40.50.1000">
    <property type="entry name" value="HAD superfamily/HAD-like"/>
    <property type="match status" value="1"/>
</dbReference>
<dbReference type="InterPro" id="IPR036412">
    <property type="entry name" value="HAD-like_sf"/>
</dbReference>
<dbReference type="InterPro" id="IPR006384">
    <property type="entry name" value="HAD_hydro_PyrdxlP_Pase-like"/>
</dbReference>
<dbReference type="InterPro" id="IPR023214">
    <property type="entry name" value="HAD_sf"/>
</dbReference>
<dbReference type="InterPro" id="IPR016965">
    <property type="entry name" value="Pase_PHOSPHO-typ"/>
</dbReference>
<dbReference type="NCBIfam" id="TIGR01489">
    <property type="entry name" value="DKMTPPase-SF"/>
    <property type="match status" value="1"/>
</dbReference>
<dbReference type="NCBIfam" id="TIGR01488">
    <property type="entry name" value="HAD-SF-IB"/>
    <property type="match status" value="1"/>
</dbReference>
<dbReference type="PANTHER" id="PTHR20889">
    <property type="entry name" value="PHOSPHATASE, ORPHAN 1, 2"/>
    <property type="match status" value="1"/>
</dbReference>
<dbReference type="PANTHER" id="PTHR20889:SF1">
    <property type="entry name" value="PYRIDOXAL PHOSPHATE PHOSPHATASE PHOSPHO2"/>
    <property type="match status" value="1"/>
</dbReference>
<dbReference type="Pfam" id="PF06888">
    <property type="entry name" value="Put_Phosphatase"/>
    <property type="match status" value="1"/>
</dbReference>
<dbReference type="PIRSF" id="PIRSF031051">
    <property type="entry name" value="PyrdxlP_Pase_PHOSPHO2"/>
    <property type="match status" value="1"/>
</dbReference>
<dbReference type="SUPFAM" id="SSF56784">
    <property type="entry name" value="HAD-like"/>
    <property type="match status" value="1"/>
</dbReference>
<accession>Q2KI06</accession>
<evidence type="ECO:0000250" key="1">
    <source>
        <dbReference type="UniProtKB" id="Q8TCD6"/>
    </source>
</evidence>
<evidence type="ECO:0000250" key="2">
    <source>
        <dbReference type="UniProtKB" id="Q8TCT1"/>
    </source>
</evidence>
<evidence type="ECO:0000250" key="3">
    <source>
        <dbReference type="UniProtKB" id="Q96GD0"/>
    </source>
</evidence>
<evidence type="ECO:0000305" key="4"/>
<proteinExistence type="evidence at transcript level"/>
<sequence>MKILLVFDFDNTIIDDNSDTWIVQCAPEKKLPLELKDSYKKGFWTEFMGRVFKYLGDEGVREDEMKRAMISMPFTPGMVELLNFIRKNKNKFDCIIISDSNSVFIDWVLEATNFHDVFDKVFTNPAAFDSNGHLTVEKHHTHSCTRCPQNLCKNVVLVEFVGEQLQQGVNYTRIVYIGDGGNDVCPVTFLKKNDIAMPRKGYALQKTLYRMCQNLEPMESSVVSWSSGVEIISYLQFLIKE</sequence>
<reference key="1">
    <citation type="submission" date="2006-01" db="EMBL/GenBank/DDBJ databases">
        <authorList>
            <consortium name="NIH - Mammalian Gene Collection (MGC) project"/>
        </authorList>
    </citation>
    <scope>NUCLEOTIDE SEQUENCE [LARGE SCALE MRNA]</scope>
    <source>
        <strain>Hereford</strain>
        <tissue>Heart ventricle</tissue>
    </source>
</reference>
<feature type="chain" id="PRO_0000254017" description="Pyridoxal phosphate phosphatase PHOSPHO2">
    <location>
        <begin position="1"/>
        <end position="241"/>
    </location>
</feature>
<feature type="active site" description="Nucleophile" evidence="2">
    <location>
        <position position="8"/>
    </location>
</feature>
<feature type="active site" description="Proton donor" evidence="3">
    <location>
        <position position="10"/>
    </location>
</feature>
<feature type="binding site" evidence="3">
    <location>
        <position position="8"/>
    </location>
    <ligand>
        <name>Mg(2+)</name>
        <dbReference type="ChEBI" id="CHEBI:18420"/>
    </ligand>
</feature>
<feature type="binding site" evidence="3">
    <location>
        <position position="10"/>
    </location>
    <ligand>
        <name>Mg(2+)</name>
        <dbReference type="ChEBI" id="CHEBI:18420"/>
    </ligand>
</feature>
<feature type="binding site" evidence="2">
    <location>
        <position position="19"/>
    </location>
    <ligand>
        <name>substrate</name>
    </ligand>
</feature>
<feature type="binding site" evidence="2">
    <location>
        <position position="99"/>
    </location>
    <ligand>
        <name>substrate</name>
    </ligand>
</feature>
<feature type="binding site" evidence="3">
    <location>
        <position position="179"/>
    </location>
    <ligand>
        <name>Mg(2+)</name>
        <dbReference type="ChEBI" id="CHEBI:18420"/>
    </ligand>
</feature>
<comment type="function">
    <text evidence="1">Phosphatase that has high activity toward pyridoxal 5'-phosphate (PLP). Also active at much lower level toward pyrophosphate, phosphoethanolamine (PEA), phosphocholine (PCho), phospho-l-tyrosine, fructose-6-phosphate, p-nitrophenyl phosphate, and h-glycerophosphate.</text>
</comment>
<comment type="catalytic activity">
    <reaction evidence="1">
        <text>pyridoxal 5'-phosphate + H2O = pyridoxal + phosphate</text>
        <dbReference type="Rhea" id="RHEA:20533"/>
        <dbReference type="ChEBI" id="CHEBI:15377"/>
        <dbReference type="ChEBI" id="CHEBI:17310"/>
        <dbReference type="ChEBI" id="CHEBI:43474"/>
        <dbReference type="ChEBI" id="CHEBI:597326"/>
        <dbReference type="EC" id="3.1.3.74"/>
    </reaction>
</comment>
<comment type="cofactor">
    <cofactor evidence="2">
        <name>Mg(2+)</name>
        <dbReference type="ChEBI" id="CHEBI:18420"/>
    </cofactor>
</comment>
<comment type="similarity">
    <text evidence="4">Belongs to the HAD-like hydrolase superfamily. PHOSPHO family.</text>
</comment>
<protein>
    <recommendedName>
        <fullName>Pyridoxal phosphate phosphatase PHOSPHO2</fullName>
        <ecNumber evidence="1">3.1.3.74</ecNumber>
    </recommendedName>
</protein>
<organism>
    <name type="scientific">Bos taurus</name>
    <name type="common">Bovine</name>
    <dbReference type="NCBI Taxonomy" id="9913"/>
    <lineage>
        <taxon>Eukaryota</taxon>
        <taxon>Metazoa</taxon>
        <taxon>Chordata</taxon>
        <taxon>Craniata</taxon>
        <taxon>Vertebrata</taxon>
        <taxon>Euteleostomi</taxon>
        <taxon>Mammalia</taxon>
        <taxon>Eutheria</taxon>
        <taxon>Laurasiatheria</taxon>
        <taxon>Artiodactyla</taxon>
        <taxon>Ruminantia</taxon>
        <taxon>Pecora</taxon>
        <taxon>Bovidae</taxon>
        <taxon>Bovinae</taxon>
        <taxon>Bos</taxon>
    </lineage>
</organism>
<gene>
    <name type="primary">PHOSPHO2</name>
</gene>